<gene>
    <name type="primary">PRM5</name>
    <name type="ORF">FOSTERSO_2274</name>
</gene>
<comment type="subcellular location">
    <subcellularLocation>
        <location evidence="4">Membrane</location>
        <topology evidence="4">Single-pass membrane protein</topology>
    </subcellularLocation>
</comment>
<comment type="similarity">
    <text evidence="4">Belongs to the PRM5 family.</text>
</comment>
<dbReference type="EMBL" id="AEEZ01000053">
    <property type="protein sequence ID" value="EGA61897.1"/>
    <property type="molecule type" value="Genomic_DNA"/>
</dbReference>
<dbReference type="HOGENOM" id="CLU_061224_0_0_1"/>
<dbReference type="OMA" id="VSHTNNE"/>
<dbReference type="OrthoDB" id="39523at4893"/>
<dbReference type="GO" id="GO:0005935">
    <property type="term" value="C:cellular bud neck"/>
    <property type="evidence" value="ECO:0007669"/>
    <property type="project" value="TreeGrafter"/>
</dbReference>
<dbReference type="GO" id="GO:0000324">
    <property type="term" value="C:fungal-type vacuole"/>
    <property type="evidence" value="ECO:0007669"/>
    <property type="project" value="TreeGrafter"/>
</dbReference>
<dbReference type="GO" id="GO:0016020">
    <property type="term" value="C:membrane"/>
    <property type="evidence" value="ECO:0007669"/>
    <property type="project" value="UniProtKB-SubCell"/>
</dbReference>
<dbReference type="InterPro" id="IPR051009">
    <property type="entry name" value="PRM"/>
</dbReference>
<dbReference type="PANTHER" id="PTHR36089">
    <property type="entry name" value="CHITIN SYNTHASE 3 COMPLEX PROTEIN CSI2-RELATED"/>
    <property type="match status" value="1"/>
</dbReference>
<dbReference type="PANTHER" id="PTHR36089:SF1">
    <property type="entry name" value="CHITIN SYNTHASE 3 COMPLEX PROTEIN CSI2-RELATED"/>
    <property type="match status" value="1"/>
</dbReference>
<name>PRM5_YEASO</name>
<feature type="chain" id="PRO_0000409315" description="Pheromone-regulated membrane protein 5">
    <location>
        <begin position="1"/>
        <end position="318"/>
    </location>
</feature>
<feature type="transmembrane region" description="Helical" evidence="2">
    <location>
        <begin position="78"/>
        <end position="98"/>
    </location>
</feature>
<feature type="region of interest" description="Disordered" evidence="3">
    <location>
        <begin position="238"/>
        <end position="318"/>
    </location>
</feature>
<feature type="compositionally biased region" description="Low complexity" evidence="3">
    <location>
        <begin position="238"/>
        <end position="247"/>
    </location>
</feature>
<feature type="compositionally biased region" description="Basic and acidic residues" evidence="3">
    <location>
        <begin position="250"/>
        <end position="261"/>
    </location>
</feature>
<feature type="compositionally biased region" description="Polar residues" evidence="3">
    <location>
        <begin position="276"/>
        <end position="285"/>
    </location>
</feature>
<feature type="compositionally biased region" description="Basic and acidic residues" evidence="3">
    <location>
        <begin position="309"/>
        <end position="318"/>
    </location>
</feature>
<feature type="modified residue" description="Phosphoserine" evidence="1">
    <location>
        <position position="129"/>
    </location>
</feature>
<feature type="modified residue" description="Phosphoserine" evidence="1">
    <location>
        <position position="279"/>
    </location>
</feature>
<feature type="modified residue" description="Phosphoserine" evidence="1">
    <location>
        <position position="282"/>
    </location>
</feature>
<feature type="modified residue" description="Phosphoserine" evidence="1">
    <location>
        <position position="288"/>
    </location>
</feature>
<feature type="cross-link" description="Glycyl lysine isopeptide (Lys-Gly) (interchain with G-Cter in ubiquitin)" evidence="1">
    <location>
        <position position="314"/>
    </location>
</feature>
<keyword id="KW-1017">Isopeptide bond</keyword>
<keyword id="KW-0472">Membrane</keyword>
<keyword id="KW-0597">Phosphoprotein</keyword>
<keyword id="KW-0812">Transmembrane</keyword>
<keyword id="KW-1133">Transmembrane helix</keyword>
<keyword id="KW-0832">Ubl conjugation</keyword>
<protein>
    <recommendedName>
        <fullName>Pheromone-regulated membrane protein 5</fullName>
    </recommendedName>
</protein>
<organism>
    <name type="scientific">Saccharomyces cerevisiae (strain FostersO)</name>
    <name type="common">Baker's yeast</name>
    <dbReference type="NCBI Taxonomy" id="764101"/>
    <lineage>
        <taxon>Eukaryota</taxon>
        <taxon>Fungi</taxon>
        <taxon>Dikarya</taxon>
        <taxon>Ascomycota</taxon>
        <taxon>Saccharomycotina</taxon>
        <taxon>Saccharomycetes</taxon>
        <taxon>Saccharomycetales</taxon>
        <taxon>Saccharomycetaceae</taxon>
        <taxon>Saccharomyces</taxon>
    </lineage>
</organism>
<accession>E7NIY5</accession>
<proteinExistence type="inferred from homology"/>
<sequence length="318" mass="34631">MTVITIAKRGLPKLTTSTSSTTTASSSSTITSVASSSSSLPLLSNSTSSSIIPSITPPSRNGNPYILDSGDMPNGTVFIXVGGIAGVIFLAILLWWVITTYSSHRLTRSVQDYESKMFSTQHTQFYGDSPYMDYPAKENFQDQVHISESDISPGNKDESVKDALVSHTNNEKPFLSNFERPLSSLVSESNRNSLFISPTGDILYKTRLSKLYQESPRLLQKPVIMTSDNVSTNSLVSTISSSSASSLDNGNEKEVGEDIRKPAKIASSPSRKLLNSPESDGSVNRNHSKGNLLVVQSKRKPTPSTYLEHMLEGKEQDE</sequence>
<reference key="1">
    <citation type="journal article" date="2011" name="PLoS Genet.">
        <title>Whole-genome comparison reveals novel genetic elements that characterize the genome of industrial strains of Saccharomyces cerevisiae.</title>
        <authorList>
            <person name="Borneman A.R."/>
            <person name="Desany B.A."/>
            <person name="Riches D."/>
            <person name="Affourtit J.P."/>
            <person name="Forgan A.H."/>
            <person name="Pretorius I.S."/>
            <person name="Egholm M."/>
            <person name="Chambers P.J."/>
        </authorList>
    </citation>
    <scope>NUCLEOTIDE SEQUENCE [LARGE SCALE GENOMIC DNA]</scope>
    <source>
        <strain>FostersO</strain>
    </source>
</reference>
<evidence type="ECO:0000250" key="1">
    <source>
        <dbReference type="UniProtKB" id="P40476"/>
    </source>
</evidence>
<evidence type="ECO:0000255" key="2"/>
<evidence type="ECO:0000256" key="3">
    <source>
        <dbReference type="SAM" id="MobiDB-lite"/>
    </source>
</evidence>
<evidence type="ECO:0000305" key="4"/>